<organism>
    <name type="scientific">Candida albicans (strain SC5314 / ATCC MYA-2876)</name>
    <name type="common">Yeast</name>
    <dbReference type="NCBI Taxonomy" id="237561"/>
    <lineage>
        <taxon>Eukaryota</taxon>
        <taxon>Fungi</taxon>
        <taxon>Dikarya</taxon>
        <taxon>Ascomycota</taxon>
        <taxon>Saccharomycotina</taxon>
        <taxon>Pichiomycetes</taxon>
        <taxon>Debaryomycetaceae</taxon>
        <taxon>Candida/Lodderomyces clade</taxon>
        <taxon>Candida</taxon>
    </lineage>
</organism>
<evidence type="ECO:0000250" key="1">
    <source>
        <dbReference type="UniProtKB" id="P38783"/>
    </source>
</evidence>
<evidence type="ECO:0000255" key="2"/>
<evidence type="ECO:0000305" key="3"/>
<reference key="1">
    <citation type="journal article" date="2004" name="Proc. Natl. Acad. Sci. U.S.A.">
        <title>The diploid genome sequence of Candida albicans.</title>
        <authorList>
            <person name="Jones T."/>
            <person name="Federspiel N.A."/>
            <person name="Chibana H."/>
            <person name="Dungan J."/>
            <person name="Kalman S."/>
            <person name="Magee B.B."/>
            <person name="Newport G."/>
            <person name="Thorstenson Y.R."/>
            <person name="Agabian N."/>
            <person name="Magee P.T."/>
            <person name="Davis R.W."/>
            <person name="Scherer S."/>
        </authorList>
    </citation>
    <scope>NUCLEOTIDE SEQUENCE [LARGE SCALE GENOMIC DNA]</scope>
    <source>
        <strain>SC5314 / ATCC MYA-2876</strain>
    </source>
</reference>
<reference key="2">
    <citation type="journal article" date="2007" name="Genome Biol.">
        <title>Assembly of the Candida albicans genome into sixteen supercontigs aligned on the eight chromosomes.</title>
        <authorList>
            <person name="van het Hoog M."/>
            <person name="Rast T.J."/>
            <person name="Martchenko M."/>
            <person name="Grindle S."/>
            <person name="Dignard D."/>
            <person name="Hogues H."/>
            <person name="Cuomo C."/>
            <person name="Berriman M."/>
            <person name="Scherer S."/>
            <person name="Magee B.B."/>
            <person name="Whiteway M."/>
            <person name="Chibana H."/>
            <person name="Nantel A."/>
            <person name="Magee P.T."/>
        </authorList>
    </citation>
    <scope>GENOME REANNOTATION</scope>
    <source>
        <strain>SC5314 / ATCC MYA-2876</strain>
    </source>
</reference>
<reference key="3">
    <citation type="journal article" date="2013" name="Genome Biol.">
        <title>Assembly of a phased diploid Candida albicans genome facilitates allele-specific measurements and provides a simple model for repeat and indel structure.</title>
        <authorList>
            <person name="Muzzey D."/>
            <person name="Schwartz K."/>
            <person name="Weissman J.S."/>
            <person name="Sherlock G."/>
        </authorList>
    </citation>
    <scope>NUCLEOTIDE SEQUENCE [LARGE SCALE GENOMIC DNA]</scope>
    <scope>GENOME REANNOTATION</scope>
    <source>
        <strain>SC5314 / ATCC MYA-2876</strain>
    </source>
</reference>
<protein>
    <recommendedName>
        <fullName evidence="1">Small ribosomal subunit protein mS41</fullName>
    </recommendedName>
    <alternativeName>
        <fullName>Protein FYV4, mitochondrial</fullName>
    </alternativeName>
</protein>
<keyword id="KW-0496">Mitochondrion</keyword>
<keyword id="KW-1185">Reference proteome</keyword>
<keyword id="KW-0687">Ribonucleoprotein</keyword>
<keyword id="KW-0689">Ribosomal protein</keyword>
<keyword id="KW-0809">Transit peptide</keyword>
<sequence>MFRTLLSSTVRSIQLKPVTSTLSTTIPSITSIPTVSYFSTSPINYKTNTSTRTKENVHDLTTFLTLIGRNSIEYKDLFEDDLNKFLSTTSAQMKNMGIDTRARRYLLRWRHKFLNDLEPLREHKLGKKRNGGERKAKTVIAKRQALERLEEKEKWAQEELEAEKRGERLF</sequence>
<feature type="transit peptide" description="Mitochondrion" evidence="2">
    <location>
        <begin position="1"/>
        <end position="20"/>
    </location>
</feature>
<feature type="chain" id="PRO_0000292469" description="Small ribosomal subunit protein mS41">
    <location>
        <begin position="21"/>
        <end position="170"/>
    </location>
</feature>
<accession>Q5A8X7</accession>
<accession>A0A1D8PCJ2</accession>
<comment type="function">
    <text evidence="1">Component of the mitochondrial ribosome (mitoribosome), a dedicated translation machinery responsible for the synthesis of mitochondrial genome-encoded proteins, including at least some of the essential transmembrane subunits of the mitochondrial respiratory chain. The mitoribosomes are attached to the mitochondrial inner membrane and translation products are cotranslationally integrated into the membrane. mS41 is involved in telomere length regulation.</text>
</comment>
<comment type="subunit">
    <text evidence="1">Component of the mitochondrial small ribosomal subunit (mt-SSU).</text>
</comment>
<comment type="subcellular location">
    <subcellularLocation>
        <location evidence="1">Mitochondrion</location>
    </subcellularLocation>
</comment>
<comment type="similarity">
    <text evidence="3">Belongs to the mitochondrion-specific ribosomal protein mS41 family.</text>
</comment>
<dbReference type="EMBL" id="CP017623">
    <property type="protein sequence ID" value="AOW25857.1"/>
    <property type="molecule type" value="Genomic_DNA"/>
</dbReference>
<dbReference type="RefSeq" id="XP_718180.1">
    <property type="nucleotide sequence ID" value="XM_713087.1"/>
</dbReference>
<dbReference type="SMR" id="Q5A8X7"/>
<dbReference type="FunCoup" id="Q5A8X7">
    <property type="interactions" value="152"/>
</dbReference>
<dbReference type="STRING" id="237561.Q5A8X7"/>
<dbReference type="EnsemblFungi" id="C1_01680C_A-T">
    <property type="protein sequence ID" value="C1_01680C_A-T-p1"/>
    <property type="gene ID" value="C1_01680C_A"/>
</dbReference>
<dbReference type="GeneID" id="3640198"/>
<dbReference type="KEGG" id="cal:CAALFM_C101680CA"/>
<dbReference type="CGD" id="CAL0000197617">
    <property type="gene designation" value="orf19.10865"/>
</dbReference>
<dbReference type="VEuPathDB" id="FungiDB:C1_01680C_A"/>
<dbReference type="eggNOG" id="ENOG502SCMV">
    <property type="taxonomic scope" value="Eukaryota"/>
</dbReference>
<dbReference type="HOGENOM" id="CLU_126121_0_0_1"/>
<dbReference type="InParanoid" id="Q5A8X7"/>
<dbReference type="OMA" id="FENKWEN"/>
<dbReference type="OrthoDB" id="18595at2759"/>
<dbReference type="PRO" id="PR:Q5A8X7"/>
<dbReference type="Proteomes" id="UP000000559">
    <property type="component" value="Chromosome 1"/>
</dbReference>
<dbReference type="GO" id="GO:0005739">
    <property type="term" value="C:mitochondrion"/>
    <property type="evidence" value="ECO:0000318"/>
    <property type="project" value="GO_Central"/>
</dbReference>
<dbReference type="GO" id="GO:1990904">
    <property type="term" value="C:ribonucleoprotein complex"/>
    <property type="evidence" value="ECO:0007669"/>
    <property type="project" value="UniProtKB-KW"/>
</dbReference>
<dbReference type="GO" id="GO:0005840">
    <property type="term" value="C:ribosome"/>
    <property type="evidence" value="ECO:0007669"/>
    <property type="project" value="UniProtKB-KW"/>
</dbReference>
<dbReference type="InterPro" id="IPR039603">
    <property type="entry name" value="Ribosomal_mS41"/>
</dbReference>
<dbReference type="InterPro" id="IPR019083">
    <property type="entry name" value="SAM_Ribosomal_mS41"/>
</dbReference>
<dbReference type="PANTHER" id="PTHR28235">
    <property type="entry name" value="PROTEIN FYV4, MITOCHONDRIAL"/>
    <property type="match status" value="1"/>
</dbReference>
<dbReference type="PANTHER" id="PTHR28235:SF1">
    <property type="entry name" value="SMALL RIBOSOMAL SUBUNIT PROTEIN MS41"/>
    <property type="match status" value="1"/>
</dbReference>
<dbReference type="Pfam" id="PF09597">
    <property type="entry name" value="SAM_Ribosomal_mS41"/>
    <property type="match status" value="1"/>
</dbReference>
<dbReference type="SMART" id="SM01238">
    <property type="entry name" value="IGR"/>
    <property type="match status" value="1"/>
</dbReference>
<gene>
    <name type="primary">FYV4</name>
    <name type="ordered locus">CAALFM_C101680CA</name>
    <name type="ORF">CaO19.10865</name>
    <name type="ORF">CaO19.3357</name>
</gene>
<proteinExistence type="inferred from homology"/>
<name>FYV4_CANAL</name>